<name>URE1_PROM0</name>
<protein>
    <recommendedName>
        <fullName evidence="1">Urease subunit alpha</fullName>
        <ecNumber evidence="1">3.5.1.5</ecNumber>
    </recommendedName>
    <alternativeName>
        <fullName evidence="1">Urea amidohydrolase subunit alpha</fullName>
    </alternativeName>
</protein>
<comment type="catalytic activity">
    <reaction evidence="1">
        <text>urea + 2 H2O + H(+) = hydrogencarbonate + 2 NH4(+)</text>
        <dbReference type="Rhea" id="RHEA:20557"/>
        <dbReference type="ChEBI" id="CHEBI:15377"/>
        <dbReference type="ChEBI" id="CHEBI:15378"/>
        <dbReference type="ChEBI" id="CHEBI:16199"/>
        <dbReference type="ChEBI" id="CHEBI:17544"/>
        <dbReference type="ChEBI" id="CHEBI:28938"/>
        <dbReference type="EC" id="3.5.1.5"/>
    </reaction>
</comment>
<comment type="cofactor">
    <cofactor evidence="1">
        <name>Ni cation</name>
        <dbReference type="ChEBI" id="CHEBI:25516"/>
    </cofactor>
    <text evidence="1">Binds 2 nickel ions per subunit.</text>
</comment>
<comment type="pathway">
    <text evidence="1">Nitrogen metabolism; urea degradation; CO(2) and NH(3) from urea (urease route): step 1/1.</text>
</comment>
<comment type="subunit">
    <text evidence="1">Heterotrimer of UreA (gamma), UreB (beta) and UreC (alpha) subunits. Three heterotrimers associate to form the active enzyme.</text>
</comment>
<comment type="subcellular location">
    <subcellularLocation>
        <location evidence="1">Cytoplasm</location>
    </subcellularLocation>
</comment>
<comment type="PTM">
    <text evidence="1">Carboxylation allows a single lysine to coordinate two nickel ions.</text>
</comment>
<comment type="similarity">
    <text evidence="1">Belongs to the metallo-dependent hydrolases superfamily. Urease alpha subunit family.</text>
</comment>
<sequence>MSYKIDRNTYAQTFGPTTGDRVRLADTELFIEVEKDLTTYGDEVKFGGGKVIRDGMGQSQVRRADGAVDTVITNALIVDWWGIIKADVGIKDGMIFEIGKAGNPDIQDNVDIVIGASTEVIAGEGHILTAGSIDTHIHFICPQQIETALASGITTMLGGGTGPATGTNATTCTPGSFHISRMLQSAEAFPMNLGFFGKGNSTNETNLIDQVEAGACGLKLHEDWGTTPSTINSCLNVADKFDVQVCIHTDTLNEAGFVEDTINAIAGRTIHTFHTEGAGGGHAPDIIKICGEKNVLPSSTNPTRPYTRNTLEEHLDMLMVCHHLDSKIPEDIAFAESRIRRETIAAEDILHDMGAFSIIASDSQAMGRVGEVITRTFQTAHKMKVQRGPLSQDSDINDNYRVKRYISKVTINPAIAHGIDKHVGSIEKGKIADLALWKPSFFAVKPELVVKGGSIVWSQMGDANASIPTPGPVHGRPMFASFGQSLIKSSFTFLSKNSIDQNIPNKLGLQKKCIAVENTRNINKSHLKLNSKLPNISVDPQTYEVFSDGELLTCEPLDEVPMAQRYFLL</sequence>
<reference key="1">
    <citation type="journal article" date="2007" name="PLoS Genet.">
        <title>Patterns and implications of gene gain and loss in the evolution of Prochlorococcus.</title>
        <authorList>
            <person name="Kettler G.C."/>
            <person name="Martiny A.C."/>
            <person name="Huang K."/>
            <person name="Zucker J."/>
            <person name="Coleman M.L."/>
            <person name="Rodrigue S."/>
            <person name="Chen F."/>
            <person name="Lapidus A."/>
            <person name="Ferriera S."/>
            <person name="Johnson J."/>
            <person name="Steglich C."/>
            <person name="Church G.M."/>
            <person name="Richardson P."/>
            <person name="Chisholm S.W."/>
        </authorList>
    </citation>
    <scope>NUCLEOTIDE SEQUENCE [LARGE SCALE GENOMIC DNA]</scope>
    <source>
        <strain>MIT 9301</strain>
    </source>
</reference>
<accession>A3PCP1</accession>
<keyword id="KW-0963">Cytoplasm</keyword>
<keyword id="KW-0378">Hydrolase</keyword>
<keyword id="KW-0479">Metal-binding</keyword>
<keyword id="KW-0533">Nickel</keyword>
<keyword id="KW-1185">Reference proteome</keyword>
<evidence type="ECO:0000255" key="1">
    <source>
        <dbReference type="HAMAP-Rule" id="MF_01953"/>
    </source>
</evidence>
<dbReference type="EC" id="3.5.1.5" evidence="1"/>
<dbReference type="EMBL" id="CP000576">
    <property type="protein sequence ID" value="ABO17516.1"/>
    <property type="molecule type" value="Genomic_DNA"/>
</dbReference>
<dbReference type="RefSeq" id="WP_011862865.1">
    <property type="nucleotide sequence ID" value="NC_009091.1"/>
</dbReference>
<dbReference type="SMR" id="A3PCP1"/>
<dbReference type="STRING" id="167546.P9301_08931"/>
<dbReference type="MEROPS" id="M38.982"/>
<dbReference type="KEGG" id="pmg:P9301_08931"/>
<dbReference type="eggNOG" id="COG0804">
    <property type="taxonomic scope" value="Bacteria"/>
</dbReference>
<dbReference type="HOGENOM" id="CLU_000980_0_0_3"/>
<dbReference type="OrthoDB" id="9802793at2"/>
<dbReference type="UniPathway" id="UPA00258">
    <property type="reaction ID" value="UER00370"/>
</dbReference>
<dbReference type="Proteomes" id="UP000001430">
    <property type="component" value="Chromosome"/>
</dbReference>
<dbReference type="GO" id="GO:0005737">
    <property type="term" value="C:cytoplasm"/>
    <property type="evidence" value="ECO:0007669"/>
    <property type="project" value="UniProtKB-SubCell"/>
</dbReference>
<dbReference type="GO" id="GO:0016151">
    <property type="term" value="F:nickel cation binding"/>
    <property type="evidence" value="ECO:0007669"/>
    <property type="project" value="UniProtKB-UniRule"/>
</dbReference>
<dbReference type="GO" id="GO:0009039">
    <property type="term" value="F:urease activity"/>
    <property type="evidence" value="ECO:0007669"/>
    <property type="project" value="UniProtKB-UniRule"/>
</dbReference>
<dbReference type="GO" id="GO:0043419">
    <property type="term" value="P:urea catabolic process"/>
    <property type="evidence" value="ECO:0007669"/>
    <property type="project" value="UniProtKB-UniRule"/>
</dbReference>
<dbReference type="CDD" id="cd00375">
    <property type="entry name" value="Urease_alpha"/>
    <property type="match status" value="1"/>
</dbReference>
<dbReference type="Gene3D" id="3.20.20.140">
    <property type="entry name" value="Metal-dependent hydrolases"/>
    <property type="match status" value="1"/>
</dbReference>
<dbReference type="Gene3D" id="2.30.40.10">
    <property type="entry name" value="Urease, subunit C, domain 1"/>
    <property type="match status" value="1"/>
</dbReference>
<dbReference type="HAMAP" id="MF_01953">
    <property type="entry name" value="Urease_alpha"/>
    <property type="match status" value="1"/>
</dbReference>
<dbReference type="InterPro" id="IPR006680">
    <property type="entry name" value="Amidohydro-rel"/>
</dbReference>
<dbReference type="InterPro" id="IPR011059">
    <property type="entry name" value="Metal-dep_hydrolase_composite"/>
</dbReference>
<dbReference type="InterPro" id="IPR032466">
    <property type="entry name" value="Metal_Hydrolase"/>
</dbReference>
<dbReference type="InterPro" id="IPR011612">
    <property type="entry name" value="Urease_alpha_N_dom"/>
</dbReference>
<dbReference type="InterPro" id="IPR050112">
    <property type="entry name" value="Urease_alpha_subunit"/>
</dbReference>
<dbReference type="InterPro" id="IPR017950">
    <property type="entry name" value="Urease_AS"/>
</dbReference>
<dbReference type="InterPro" id="IPR005848">
    <property type="entry name" value="Urease_asu"/>
</dbReference>
<dbReference type="InterPro" id="IPR017951">
    <property type="entry name" value="Urease_asu_c"/>
</dbReference>
<dbReference type="NCBIfam" id="NF009685">
    <property type="entry name" value="PRK13206.1"/>
    <property type="match status" value="1"/>
</dbReference>
<dbReference type="NCBIfam" id="NF009686">
    <property type="entry name" value="PRK13207.1"/>
    <property type="match status" value="1"/>
</dbReference>
<dbReference type="NCBIfam" id="TIGR01792">
    <property type="entry name" value="urease_alph"/>
    <property type="match status" value="1"/>
</dbReference>
<dbReference type="PANTHER" id="PTHR43440">
    <property type="entry name" value="UREASE"/>
    <property type="match status" value="1"/>
</dbReference>
<dbReference type="PANTHER" id="PTHR43440:SF1">
    <property type="entry name" value="UREASE"/>
    <property type="match status" value="1"/>
</dbReference>
<dbReference type="Pfam" id="PF01979">
    <property type="entry name" value="Amidohydro_1"/>
    <property type="match status" value="1"/>
</dbReference>
<dbReference type="Pfam" id="PF00449">
    <property type="entry name" value="Urease_alpha"/>
    <property type="match status" value="1"/>
</dbReference>
<dbReference type="PRINTS" id="PR01752">
    <property type="entry name" value="UREASE"/>
</dbReference>
<dbReference type="SUPFAM" id="SSF51338">
    <property type="entry name" value="Composite domain of metallo-dependent hydrolases"/>
    <property type="match status" value="2"/>
</dbReference>
<dbReference type="SUPFAM" id="SSF51556">
    <property type="entry name" value="Metallo-dependent hydrolases"/>
    <property type="match status" value="1"/>
</dbReference>
<dbReference type="PROSITE" id="PS00145">
    <property type="entry name" value="UREASE_2"/>
    <property type="match status" value="1"/>
</dbReference>
<dbReference type="PROSITE" id="PS51368">
    <property type="entry name" value="UREASE_3"/>
    <property type="match status" value="1"/>
</dbReference>
<organism>
    <name type="scientific">Prochlorococcus marinus (strain MIT 9301)</name>
    <dbReference type="NCBI Taxonomy" id="167546"/>
    <lineage>
        <taxon>Bacteria</taxon>
        <taxon>Bacillati</taxon>
        <taxon>Cyanobacteriota</taxon>
        <taxon>Cyanophyceae</taxon>
        <taxon>Synechococcales</taxon>
        <taxon>Prochlorococcaceae</taxon>
        <taxon>Prochlorococcus</taxon>
    </lineage>
</organism>
<feature type="chain" id="PRO_1000070679" description="Urease subunit alpha">
    <location>
        <begin position="1"/>
        <end position="569"/>
    </location>
</feature>
<feature type="domain" description="Urease" evidence="1">
    <location>
        <begin position="131"/>
        <end position="569"/>
    </location>
</feature>
<feature type="active site" description="Proton donor" evidence="1">
    <location>
        <position position="322"/>
    </location>
</feature>
<feature type="binding site" evidence="1">
    <location>
        <position position="136"/>
    </location>
    <ligand>
        <name>Ni(2+)</name>
        <dbReference type="ChEBI" id="CHEBI:49786"/>
        <label>1</label>
    </ligand>
</feature>
<feature type="binding site" evidence="1">
    <location>
        <position position="138"/>
    </location>
    <ligand>
        <name>Ni(2+)</name>
        <dbReference type="ChEBI" id="CHEBI:49786"/>
        <label>1</label>
    </ligand>
</feature>
<feature type="binding site" description="via carbamate group" evidence="1">
    <location>
        <position position="219"/>
    </location>
    <ligand>
        <name>Ni(2+)</name>
        <dbReference type="ChEBI" id="CHEBI:49786"/>
        <label>1</label>
    </ligand>
</feature>
<feature type="binding site" description="via carbamate group" evidence="1">
    <location>
        <position position="219"/>
    </location>
    <ligand>
        <name>Ni(2+)</name>
        <dbReference type="ChEBI" id="CHEBI:49786"/>
        <label>2</label>
    </ligand>
</feature>
<feature type="binding site" evidence="1">
    <location>
        <position position="221"/>
    </location>
    <ligand>
        <name>substrate</name>
    </ligand>
</feature>
<feature type="binding site" evidence="1">
    <location>
        <position position="248"/>
    </location>
    <ligand>
        <name>Ni(2+)</name>
        <dbReference type="ChEBI" id="CHEBI:49786"/>
        <label>2</label>
    </ligand>
</feature>
<feature type="binding site" evidence="1">
    <location>
        <position position="274"/>
    </location>
    <ligand>
        <name>Ni(2+)</name>
        <dbReference type="ChEBI" id="CHEBI:49786"/>
        <label>2</label>
    </ligand>
</feature>
<feature type="binding site" evidence="1">
    <location>
        <position position="362"/>
    </location>
    <ligand>
        <name>Ni(2+)</name>
        <dbReference type="ChEBI" id="CHEBI:49786"/>
        <label>1</label>
    </ligand>
</feature>
<feature type="modified residue" description="N6-carboxylysine" evidence="1">
    <location>
        <position position="219"/>
    </location>
</feature>
<gene>
    <name evidence="1" type="primary">ureC</name>
    <name type="ordered locus">P9301_08931</name>
</gene>
<proteinExistence type="inferred from homology"/>